<sequence>MSRVQLALNVDDLEAAITFYSRLFNAEPAKRKPGYANFAIADPPLKLVLLENPGTGGTLNHLGVEVGSSNTVHAEIARLTEAGLVTEKEIGTTCCFATQDKVWVTGPGGERWEVYTVLADSETFGSGPRHNDTSDGEASMCCDGQVAVGASG</sequence>
<comment type="induction">
    <text evidence="2">By cadmium.</text>
</comment>
<comment type="similarity">
    <text evidence="3">To B.subtilis YqcK.</text>
</comment>
<organism>
    <name type="scientific">Mycobacterium bovis (strain ATCC BAA-935 / AF2122/97)</name>
    <dbReference type="NCBI Taxonomy" id="233413"/>
    <lineage>
        <taxon>Bacteria</taxon>
        <taxon>Bacillati</taxon>
        <taxon>Actinomycetota</taxon>
        <taxon>Actinomycetes</taxon>
        <taxon>Mycobacteriales</taxon>
        <taxon>Mycobacteriaceae</taxon>
        <taxon>Mycobacterium</taxon>
        <taxon>Mycobacterium tuberculosis complex</taxon>
    </lineage>
</organism>
<feature type="initiator methionine" description="Removed" evidence="2">
    <location>
        <position position="1"/>
    </location>
</feature>
<feature type="chain" id="PRO_0000089274" description="Cadmium-induced protein CadI">
    <location>
        <begin position="2"/>
        <end position="152"/>
    </location>
</feature>
<feature type="domain" description="VOC" evidence="1">
    <location>
        <begin position="2"/>
        <end position="117"/>
    </location>
</feature>
<reference key="1">
    <citation type="journal article" date="2003" name="Proc. Natl. Acad. Sci. U.S.A.">
        <title>The complete genome sequence of Mycobacterium bovis.</title>
        <authorList>
            <person name="Garnier T."/>
            <person name="Eiglmeier K."/>
            <person name="Camus J.-C."/>
            <person name="Medina N."/>
            <person name="Mansoor H."/>
            <person name="Pryor M."/>
            <person name="Duthoy S."/>
            <person name="Grondin S."/>
            <person name="Lacroix C."/>
            <person name="Monsempe C."/>
            <person name="Simon S."/>
            <person name="Harris B."/>
            <person name="Atkin R."/>
            <person name="Doggett J."/>
            <person name="Mayes R."/>
            <person name="Keating L."/>
            <person name="Wheeler P.R."/>
            <person name="Parkhill J."/>
            <person name="Barrell B.G."/>
            <person name="Cole S.T."/>
            <person name="Gordon S.V."/>
            <person name="Hewinson R.G."/>
        </authorList>
    </citation>
    <scope>NUCLEOTIDE SEQUENCE [LARGE SCALE GENOMIC DNA]</scope>
    <source>
        <strain>ATCC BAA-935 / AF2122/97</strain>
    </source>
</reference>
<reference key="2">
    <citation type="journal article" date="2017" name="Genome Announc.">
        <title>Updated reference genome sequence and annotation of Mycobacterium bovis AF2122/97.</title>
        <authorList>
            <person name="Malone K.M."/>
            <person name="Farrell D."/>
            <person name="Stuber T.P."/>
            <person name="Schubert O.T."/>
            <person name="Aebersold R."/>
            <person name="Robbe-Austerman S."/>
            <person name="Gordon S.V."/>
        </authorList>
    </citation>
    <scope>NUCLEOTIDE SEQUENCE [LARGE SCALE GENOMIC DNA]</scope>
    <scope>GENOME REANNOTATION</scope>
    <source>
        <strain>ATCC BAA-935 / AF2122/97</strain>
    </source>
</reference>
<reference key="3">
    <citation type="journal article" date="2001" name="FEMS Microbiol. Lett.">
        <title>Identification of a cadmium-induced gene in Mycobacterium bovis and Mycobacterium tuberculosis.</title>
        <authorList>
            <person name="Hotter G.S."/>
            <person name="Wilson T."/>
            <person name="Collins D.M."/>
        </authorList>
    </citation>
    <scope>PROTEIN SEQUENCE OF 2-21</scope>
    <scope>GENE NAME</scope>
    <scope>INDUCTION</scope>
    <source>
        <strain>ATCC 35723 / TMC 405</strain>
    </source>
</reference>
<name>CADI_MYCBO</name>
<proteinExistence type="evidence at protein level"/>
<keyword id="KW-0903">Direct protein sequencing</keyword>
<keyword id="KW-1185">Reference proteome</keyword>
<evidence type="ECO:0000255" key="1">
    <source>
        <dbReference type="PROSITE-ProRule" id="PRU01163"/>
    </source>
</evidence>
<evidence type="ECO:0000269" key="2">
    <source>
    </source>
</evidence>
<evidence type="ECO:0000305" key="3"/>
<protein>
    <recommendedName>
        <fullName>Cadmium-induced protein CadI</fullName>
    </recommendedName>
</protein>
<accession>P0A5N7</accession>
<accession>A0A1R3Y1T3</accession>
<accession>P71940</accession>
<accession>X2BLI3</accession>
<gene>
    <name type="primary">cadI</name>
    <name type="ordered locus">BQ2027_MB2674</name>
</gene>
<dbReference type="EMBL" id="LT708304">
    <property type="protein sequence ID" value="SIU01292.1"/>
    <property type="molecule type" value="Genomic_DNA"/>
</dbReference>
<dbReference type="RefSeq" id="NP_856320.1">
    <property type="nucleotide sequence ID" value="NC_002945.3"/>
</dbReference>
<dbReference type="RefSeq" id="WP_003413675.1">
    <property type="nucleotide sequence ID" value="NC_002945.4"/>
</dbReference>
<dbReference type="SMR" id="P0A5N7"/>
<dbReference type="GeneID" id="45426646"/>
<dbReference type="KEGG" id="mbo:BQ2027_MB2674"/>
<dbReference type="PATRIC" id="fig|233413.5.peg.2935"/>
<dbReference type="Proteomes" id="UP000001419">
    <property type="component" value="Chromosome"/>
</dbReference>
<dbReference type="GO" id="GO:0046686">
    <property type="term" value="P:response to cadmium ion"/>
    <property type="evidence" value="ECO:0007669"/>
    <property type="project" value="TreeGrafter"/>
</dbReference>
<dbReference type="CDD" id="cd07254">
    <property type="entry name" value="VOC_like"/>
    <property type="match status" value="1"/>
</dbReference>
<dbReference type="FunFam" id="3.10.180.10:FF:000032">
    <property type="entry name" value="Cadmium inducible protein CadI"/>
    <property type="match status" value="1"/>
</dbReference>
<dbReference type="Gene3D" id="3.10.180.10">
    <property type="entry name" value="2,3-Dihydroxybiphenyl 1,2-Dioxygenase, domain 1"/>
    <property type="match status" value="1"/>
</dbReference>
<dbReference type="InterPro" id="IPR052393">
    <property type="entry name" value="Cadmium-induced_rsp"/>
</dbReference>
<dbReference type="InterPro" id="IPR029068">
    <property type="entry name" value="Glyas_Bleomycin-R_OHBP_Dase"/>
</dbReference>
<dbReference type="InterPro" id="IPR004360">
    <property type="entry name" value="Glyas_Fos-R_dOase_dom"/>
</dbReference>
<dbReference type="InterPro" id="IPR037523">
    <property type="entry name" value="VOC"/>
</dbReference>
<dbReference type="InterPro" id="IPR049789">
    <property type="entry name" value="YqcK/CadI-like"/>
</dbReference>
<dbReference type="NCBIfam" id="NF041414">
    <property type="entry name" value="ArsI_CadI_VOC"/>
    <property type="match status" value="1"/>
</dbReference>
<dbReference type="PANTHER" id="PTHR41294">
    <property type="entry name" value="CADMIUM-INDUCED PROTEIN CADI"/>
    <property type="match status" value="1"/>
</dbReference>
<dbReference type="PANTHER" id="PTHR41294:SF1">
    <property type="entry name" value="CADMIUM-INDUCED PROTEIN CADI"/>
    <property type="match status" value="1"/>
</dbReference>
<dbReference type="Pfam" id="PF00903">
    <property type="entry name" value="Glyoxalase"/>
    <property type="match status" value="1"/>
</dbReference>
<dbReference type="SUPFAM" id="SSF54593">
    <property type="entry name" value="Glyoxalase/Bleomycin resistance protein/Dihydroxybiphenyl dioxygenase"/>
    <property type="match status" value="1"/>
</dbReference>
<dbReference type="PROSITE" id="PS51819">
    <property type="entry name" value="VOC"/>
    <property type="match status" value="1"/>
</dbReference>